<evidence type="ECO:0000255" key="1">
    <source>
        <dbReference type="HAMAP-Rule" id="MF_00368"/>
    </source>
</evidence>
<evidence type="ECO:0000305" key="2"/>
<feature type="chain" id="PRO_1000121478" description="Large ribosomal subunit protein bL12">
    <location>
        <begin position="1"/>
        <end position="125"/>
    </location>
</feature>
<name>RL7_RHILW</name>
<comment type="function">
    <text evidence="1">Forms part of the ribosomal stalk which helps the ribosome interact with GTP-bound translation factors. Is thus essential for accurate translation.</text>
</comment>
<comment type="subunit">
    <text evidence="1">Homodimer. Part of the ribosomal stalk of the 50S ribosomal subunit. Forms a multimeric L10(L12)X complex, where L10 forms an elongated spine to which 2 to 4 L12 dimers bind in a sequential fashion. Binds GTP-bound translation factors.</text>
</comment>
<comment type="similarity">
    <text evidence="1">Belongs to the bacterial ribosomal protein bL12 family.</text>
</comment>
<proteinExistence type="inferred from homology"/>
<reference key="1">
    <citation type="journal article" date="2010" name="Stand. Genomic Sci.">
        <title>Complete genome sequence of Rhizobium leguminosarum bv trifolii strain WSM2304, an effective microsymbiont of the South American clover Trifolium polymorphum.</title>
        <authorList>
            <person name="Reeve W."/>
            <person name="O'Hara G."/>
            <person name="Chain P."/>
            <person name="Ardley J."/>
            <person name="Brau L."/>
            <person name="Nandesena K."/>
            <person name="Tiwari R."/>
            <person name="Malfatti S."/>
            <person name="Kiss H."/>
            <person name="Lapidus A."/>
            <person name="Copeland A."/>
            <person name="Nolan M."/>
            <person name="Land M."/>
            <person name="Ivanova N."/>
            <person name="Mavromatis K."/>
            <person name="Markowitz V."/>
            <person name="Kyrpides N."/>
            <person name="Melino V."/>
            <person name="Denton M."/>
            <person name="Yates R."/>
            <person name="Howieson J."/>
        </authorList>
    </citation>
    <scope>NUCLEOTIDE SEQUENCE [LARGE SCALE GENOMIC DNA]</scope>
    <source>
        <strain>WSM2304</strain>
    </source>
</reference>
<protein>
    <recommendedName>
        <fullName evidence="1">Large ribosomal subunit protein bL12</fullName>
    </recommendedName>
    <alternativeName>
        <fullName evidence="2">50S ribosomal protein L7/L12</fullName>
    </alternativeName>
</protein>
<sequence length="125" mass="12775">MADLAKIVDDLSSLTVLEAAELSKLLEEKWGVSAAAPVAVAAAAGGAGPAVVEEEKTEFDVILVEAGANKINVIKEVRAITGLGLKEAKDLVEGAPKAVKEGVNKAEAADIKKKLEDAGAKADVK</sequence>
<dbReference type="EMBL" id="CP001191">
    <property type="protein sequence ID" value="ACI54617.1"/>
    <property type="molecule type" value="Genomic_DNA"/>
</dbReference>
<dbReference type="RefSeq" id="WP_003578658.1">
    <property type="nucleotide sequence ID" value="NC_011369.1"/>
</dbReference>
<dbReference type="SMR" id="B5ZYS6"/>
<dbReference type="STRING" id="395492.Rleg2_1323"/>
<dbReference type="KEGG" id="rlt:Rleg2_1323"/>
<dbReference type="eggNOG" id="COG0222">
    <property type="taxonomic scope" value="Bacteria"/>
</dbReference>
<dbReference type="HOGENOM" id="CLU_086499_3_0_5"/>
<dbReference type="Proteomes" id="UP000008330">
    <property type="component" value="Chromosome"/>
</dbReference>
<dbReference type="GO" id="GO:0022625">
    <property type="term" value="C:cytosolic large ribosomal subunit"/>
    <property type="evidence" value="ECO:0007669"/>
    <property type="project" value="TreeGrafter"/>
</dbReference>
<dbReference type="GO" id="GO:0003729">
    <property type="term" value="F:mRNA binding"/>
    <property type="evidence" value="ECO:0007669"/>
    <property type="project" value="TreeGrafter"/>
</dbReference>
<dbReference type="GO" id="GO:0003735">
    <property type="term" value="F:structural constituent of ribosome"/>
    <property type="evidence" value="ECO:0007669"/>
    <property type="project" value="InterPro"/>
</dbReference>
<dbReference type="GO" id="GO:0006412">
    <property type="term" value="P:translation"/>
    <property type="evidence" value="ECO:0007669"/>
    <property type="project" value="UniProtKB-UniRule"/>
</dbReference>
<dbReference type="CDD" id="cd00387">
    <property type="entry name" value="Ribosomal_L7_L12"/>
    <property type="match status" value="1"/>
</dbReference>
<dbReference type="FunFam" id="1.20.5.710:FF:000007">
    <property type="entry name" value="50S ribosomal protein L7/L12"/>
    <property type="match status" value="1"/>
</dbReference>
<dbReference type="FunFam" id="3.30.1390.10:FF:000001">
    <property type="entry name" value="50S ribosomal protein L7/L12"/>
    <property type="match status" value="1"/>
</dbReference>
<dbReference type="Gene3D" id="3.30.1390.10">
    <property type="match status" value="1"/>
</dbReference>
<dbReference type="Gene3D" id="1.20.5.710">
    <property type="entry name" value="Single helix bin"/>
    <property type="match status" value="1"/>
</dbReference>
<dbReference type="HAMAP" id="MF_00368">
    <property type="entry name" value="Ribosomal_bL12"/>
    <property type="match status" value="1"/>
</dbReference>
<dbReference type="InterPro" id="IPR000206">
    <property type="entry name" value="Ribosomal_bL12"/>
</dbReference>
<dbReference type="InterPro" id="IPR013823">
    <property type="entry name" value="Ribosomal_bL12_C"/>
</dbReference>
<dbReference type="InterPro" id="IPR014719">
    <property type="entry name" value="Ribosomal_bL12_C/ClpS-like"/>
</dbReference>
<dbReference type="InterPro" id="IPR008932">
    <property type="entry name" value="Ribosomal_bL12_oligo"/>
</dbReference>
<dbReference type="InterPro" id="IPR036235">
    <property type="entry name" value="Ribosomal_bL12_oligo_N_sf"/>
</dbReference>
<dbReference type="NCBIfam" id="TIGR00855">
    <property type="entry name" value="L12"/>
    <property type="match status" value="1"/>
</dbReference>
<dbReference type="PANTHER" id="PTHR45987">
    <property type="entry name" value="39S RIBOSOMAL PROTEIN L12"/>
    <property type="match status" value="1"/>
</dbReference>
<dbReference type="PANTHER" id="PTHR45987:SF4">
    <property type="entry name" value="LARGE RIBOSOMAL SUBUNIT PROTEIN BL12M"/>
    <property type="match status" value="1"/>
</dbReference>
<dbReference type="Pfam" id="PF00542">
    <property type="entry name" value="Ribosomal_L12"/>
    <property type="match status" value="1"/>
</dbReference>
<dbReference type="Pfam" id="PF16320">
    <property type="entry name" value="Ribosomal_L12_N"/>
    <property type="match status" value="1"/>
</dbReference>
<dbReference type="SUPFAM" id="SSF54736">
    <property type="entry name" value="ClpS-like"/>
    <property type="match status" value="1"/>
</dbReference>
<dbReference type="SUPFAM" id="SSF48300">
    <property type="entry name" value="Ribosomal protein L7/12, oligomerisation (N-terminal) domain"/>
    <property type="match status" value="1"/>
</dbReference>
<accession>B5ZYS6</accession>
<keyword id="KW-1185">Reference proteome</keyword>
<keyword id="KW-0687">Ribonucleoprotein</keyword>
<keyword id="KW-0689">Ribosomal protein</keyword>
<organism>
    <name type="scientific">Rhizobium leguminosarum bv. trifolii (strain WSM2304)</name>
    <dbReference type="NCBI Taxonomy" id="395492"/>
    <lineage>
        <taxon>Bacteria</taxon>
        <taxon>Pseudomonadati</taxon>
        <taxon>Pseudomonadota</taxon>
        <taxon>Alphaproteobacteria</taxon>
        <taxon>Hyphomicrobiales</taxon>
        <taxon>Rhizobiaceae</taxon>
        <taxon>Rhizobium/Agrobacterium group</taxon>
        <taxon>Rhizobium</taxon>
    </lineage>
</organism>
<gene>
    <name evidence="1" type="primary">rplL</name>
    <name type="ordered locus">Rleg2_1323</name>
</gene>